<feature type="peptide" id="PRO_0000436390" description="Toxin Tx7335" evidence="2">
    <location>
        <begin position="1"/>
        <end position="63"/>
    </location>
</feature>
<feature type="disulfide bond" evidence="1">
    <location>
        <begin position="3"/>
        <end position="24"/>
    </location>
</feature>
<feature type="disulfide bond" evidence="2">
    <location>
        <begin position="17"/>
        <end position="39"/>
    </location>
</feature>
<feature type="disulfide bond" evidence="5">
    <location>
        <begin position="25"/>
        <end position="55"/>
    </location>
</feature>
<feature type="disulfide bond" evidence="1">
    <location>
        <begin position="56"/>
        <end position="61"/>
    </location>
</feature>
<comment type="function">
    <text evidence="2">Activates bacterial pH-gated potassium channel KcsA by binding to its extracellular domain, probably at a site different from channel inhibitors. Increases both mean open time and open probability of KscA.</text>
</comment>
<comment type="subcellular location">
    <subcellularLocation>
        <location evidence="2">Secreted</location>
    </subcellularLocation>
</comment>
<comment type="tissue specificity">
    <text evidence="5">Expressed by the venom gland.</text>
</comment>
<comment type="PTM">
    <text evidence="2">Contains 4 disulfide bonds.</text>
</comment>
<comment type="mass spectrometry"/>
<comment type="similarity">
    <text evidence="4">Belongs to the three-finger toxin family. Ancestral subfamily. Orphan group XIX sub-subfamily.</text>
</comment>
<protein>
    <recommendedName>
        <fullName evidence="3">Toxin Tx7335</fullName>
    </recommendedName>
</protein>
<accession>C0HJT4</accession>
<proteinExistence type="evidence at protein level"/>
<reference key="1">
    <citation type="journal article" date="2016" name="Sci. Rep.">
        <title>Discovery and characterisation of a novel toxin from Dendroaspis angusticeps, named Tx7335, that activates the potassium channel KcsA.</title>
        <authorList>
            <person name="Rivera-Torres I.O."/>
            <person name="Jin T.B."/>
            <person name="Cadene M."/>
            <person name="Chait B.T."/>
            <person name="Poget S.F."/>
        </authorList>
    </citation>
    <scope>PROTEIN SEQUENCE</scope>
    <scope>FUNCTION</scope>
    <scope>SUBCELLULAR LOCATION</scope>
    <scope>MASS SPECTROMETRY</scope>
    <scope>IDENTIFICATION BY MASS SPECTROMETRY</scope>
    <source>
        <tissue>Venom</tissue>
    </source>
</reference>
<dbReference type="SMR" id="C0HJT4"/>
<dbReference type="TCDB" id="8.B.23.2.1">
    <property type="family name" value="the mambalgin (mambalgin) family"/>
</dbReference>
<dbReference type="GO" id="GO:0005576">
    <property type="term" value="C:extracellular region"/>
    <property type="evidence" value="ECO:0007669"/>
    <property type="project" value="UniProtKB-SubCell"/>
</dbReference>
<dbReference type="GO" id="GO:0090729">
    <property type="term" value="F:toxin activity"/>
    <property type="evidence" value="ECO:0007669"/>
    <property type="project" value="UniProtKB-KW"/>
</dbReference>
<dbReference type="Gene3D" id="2.10.60.10">
    <property type="entry name" value="CD59"/>
    <property type="match status" value="1"/>
</dbReference>
<dbReference type="InterPro" id="IPR045860">
    <property type="entry name" value="Snake_toxin-like_sf"/>
</dbReference>
<dbReference type="SUPFAM" id="SSF57302">
    <property type="entry name" value="Snake toxin-like"/>
    <property type="match status" value="1"/>
</dbReference>
<evidence type="ECO:0000250" key="1">
    <source>
        <dbReference type="UniProtKB" id="P81782"/>
    </source>
</evidence>
<evidence type="ECO:0000269" key="2">
    <source>
    </source>
</evidence>
<evidence type="ECO:0000303" key="3">
    <source>
    </source>
</evidence>
<evidence type="ECO:0000305" key="4"/>
<evidence type="ECO:0000305" key="5">
    <source>
    </source>
</evidence>
<name>3NOJ_DENAN</name>
<keyword id="KW-0903">Direct protein sequencing</keyword>
<keyword id="KW-1015">Disulfide bond</keyword>
<keyword id="KW-0964">Secreted</keyword>
<keyword id="KW-0800">Toxin</keyword>
<sequence>LECHRRGSFISDGKITCSAKKTFCCKMYEKIFGIYWYGCAKTYTEKNTWNVYSKCCTTNLCNT</sequence>
<organism>
    <name type="scientific">Dendroaspis angusticeps</name>
    <name type="common">Eastern green mamba</name>
    <name type="synonym">Naja angusticeps</name>
    <dbReference type="NCBI Taxonomy" id="8618"/>
    <lineage>
        <taxon>Eukaryota</taxon>
        <taxon>Metazoa</taxon>
        <taxon>Chordata</taxon>
        <taxon>Craniata</taxon>
        <taxon>Vertebrata</taxon>
        <taxon>Euteleostomi</taxon>
        <taxon>Lepidosauria</taxon>
        <taxon>Squamata</taxon>
        <taxon>Bifurcata</taxon>
        <taxon>Unidentata</taxon>
        <taxon>Episquamata</taxon>
        <taxon>Toxicofera</taxon>
        <taxon>Serpentes</taxon>
        <taxon>Colubroidea</taxon>
        <taxon>Elapidae</taxon>
        <taxon>Elapinae</taxon>
        <taxon>Dendroaspis</taxon>
    </lineage>
</organism>